<reference key="1">
    <citation type="journal article" date="2005" name="Nature">
        <title>The genome of the social amoeba Dictyostelium discoideum.</title>
        <authorList>
            <person name="Eichinger L."/>
            <person name="Pachebat J.A."/>
            <person name="Gloeckner G."/>
            <person name="Rajandream M.A."/>
            <person name="Sucgang R."/>
            <person name="Berriman M."/>
            <person name="Song J."/>
            <person name="Olsen R."/>
            <person name="Szafranski K."/>
            <person name="Xu Q."/>
            <person name="Tunggal B."/>
            <person name="Kummerfeld S."/>
            <person name="Madera M."/>
            <person name="Konfortov B.A."/>
            <person name="Rivero F."/>
            <person name="Bankier A.T."/>
            <person name="Lehmann R."/>
            <person name="Hamlin N."/>
            <person name="Davies R."/>
            <person name="Gaudet P."/>
            <person name="Fey P."/>
            <person name="Pilcher K."/>
            <person name="Chen G."/>
            <person name="Saunders D."/>
            <person name="Sodergren E.J."/>
            <person name="Davis P."/>
            <person name="Kerhornou A."/>
            <person name="Nie X."/>
            <person name="Hall N."/>
            <person name="Anjard C."/>
            <person name="Hemphill L."/>
            <person name="Bason N."/>
            <person name="Farbrother P."/>
            <person name="Desany B."/>
            <person name="Just E."/>
            <person name="Morio T."/>
            <person name="Rost R."/>
            <person name="Churcher C.M."/>
            <person name="Cooper J."/>
            <person name="Haydock S."/>
            <person name="van Driessche N."/>
            <person name="Cronin A."/>
            <person name="Goodhead I."/>
            <person name="Muzny D.M."/>
            <person name="Mourier T."/>
            <person name="Pain A."/>
            <person name="Lu M."/>
            <person name="Harper D."/>
            <person name="Lindsay R."/>
            <person name="Hauser H."/>
            <person name="James K.D."/>
            <person name="Quiles M."/>
            <person name="Madan Babu M."/>
            <person name="Saito T."/>
            <person name="Buchrieser C."/>
            <person name="Wardroper A."/>
            <person name="Felder M."/>
            <person name="Thangavelu M."/>
            <person name="Johnson D."/>
            <person name="Knights A."/>
            <person name="Loulseged H."/>
            <person name="Mungall K.L."/>
            <person name="Oliver K."/>
            <person name="Price C."/>
            <person name="Quail M.A."/>
            <person name="Urushihara H."/>
            <person name="Hernandez J."/>
            <person name="Rabbinowitsch E."/>
            <person name="Steffen D."/>
            <person name="Sanders M."/>
            <person name="Ma J."/>
            <person name="Kohara Y."/>
            <person name="Sharp S."/>
            <person name="Simmonds M.N."/>
            <person name="Spiegler S."/>
            <person name="Tivey A."/>
            <person name="Sugano S."/>
            <person name="White B."/>
            <person name="Walker D."/>
            <person name="Woodward J.R."/>
            <person name="Winckler T."/>
            <person name="Tanaka Y."/>
            <person name="Shaulsky G."/>
            <person name="Schleicher M."/>
            <person name="Weinstock G.M."/>
            <person name="Rosenthal A."/>
            <person name="Cox E.C."/>
            <person name="Chisholm R.L."/>
            <person name="Gibbs R.A."/>
            <person name="Loomis W.F."/>
            <person name="Platzer M."/>
            <person name="Kay R.R."/>
            <person name="Williams J.G."/>
            <person name="Dear P.H."/>
            <person name="Noegel A.A."/>
            <person name="Barrell B.G."/>
            <person name="Kuspa A."/>
        </authorList>
    </citation>
    <scope>NUCLEOTIDE SEQUENCE [LARGE SCALE GENOMIC DNA]</scope>
    <source>
        <strain>AX4</strain>
    </source>
</reference>
<reference key="2">
    <citation type="journal article" date="2007" name="Biochem. Biophys. Res. Commun.">
        <title>Dictyostelium gnt15 encodes a protein with similarity to LARGE and plays an essential role in development.</title>
        <authorList>
            <person name="Pang T.L."/>
            <person name="Wu C.J."/>
            <person name="Chen P.A."/>
            <person name="Weng Y.L."/>
            <person name="Chen M.Y."/>
        </authorList>
    </citation>
    <scope>DEVELOPMENTAL STAGE</scope>
    <scope>DISRUPTION PHENOTYPE</scope>
</reference>
<keyword id="KW-0325">Glycoprotein</keyword>
<keyword id="KW-0472">Membrane</keyword>
<keyword id="KW-1185">Reference proteome</keyword>
<keyword id="KW-0735">Signal-anchor</keyword>
<keyword id="KW-0812">Transmembrane</keyword>
<keyword id="KW-1133">Transmembrane helix</keyword>
<proteinExistence type="evidence at transcript level"/>
<comment type="subcellular location">
    <subcellularLocation>
        <location evidence="4">Membrane</location>
        <topology evidence="4">Single-pass type II membrane protein</topology>
    </subcellularLocation>
</comment>
<comment type="developmental stage">
    <text evidence="3">Expressed at a relatively steady level during vegetative growth and development.</text>
</comment>
<comment type="disruption phenotype">
    <text evidence="3">No visible phenotype. Cells exhibit normal developmental morphology.</text>
</comment>
<comment type="similarity">
    <text evidence="4">Belongs to the glycosyltransferase 8 family. Highly divergent.</text>
</comment>
<protein>
    <recommendedName>
        <fullName>Glycosyltransferase-like protein gnt14</fullName>
    </recommendedName>
</protein>
<gene>
    <name type="primary">gnt14</name>
    <name type="ORF">DDB_G0284567</name>
</gene>
<accession>Q54PG8</accession>
<organism>
    <name type="scientific">Dictyostelium discoideum</name>
    <name type="common">Social amoeba</name>
    <dbReference type="NCBI Taxonomy" id="44689"/>
    <lineage>
        <taxon>Eukaryota</taxon>
        <taxon>Amoebozoa</taxon>
        <taxon>Evosea</taxon>
        <taxon>Eumycetozoa</taxon>
        <taxon>Dictyostelia</taxon>
        <taxon>Dictyosteliales</taxon>
        <taxon>Dictyosteliaceae</taxon>
        <taxon>Dictyostelium</taxon>
    </lineage>
</organism>
<evidence type="ECO:0000255" key="1"/>
<evidence type="ECO:0000256" key="2">
    <source>
        <dbReference type="SAM" id="MobiDB-lite"/>
    </source>
</evidence>
<evidence type="ECO:0000269" key="3">
    <source>
    </source>
</evidence>
<evidence type="ECO:0000305" key="4"/>
<feature type="chain" id="PRO_0000393409" description="Glycosyltransferase-like protein gnt14">
    <location>
        <begin position="1"/>
        <end position="640"/>
    </location>
</feature>
<feature type="topological domain" description="Cytoplasmic" evidence="1">
    <location>
        <begin position="1"/>
        <end position="14"/>
    </location>
</feature>
<feature type="transmembrane region" description="Helical; Signal-anchor for type II membrane protein" evidence="1">
    <location>
        <begin position="15"/>
        <end position="35"/>
    </location>
</feature>
<feature type="topological domain" description="Extracellular" evidence="1">
    <location>
        <begin position="36"/>
        <end position="640"/>
    </location>
</feature>
<feature type="region of interest" description="Disordered" evidence="2">
    <location>
        <begin position="63"/>
        <end position="184"/>
    </location>
</feature>
<feature type="region of interest" description="Disordered" evidence="2">
    <location>
        <begin position="254"/>
        <end position="277"/>
    </location>
</feature>
<feature type="compositionally biased region" description="Low complexity" evidence="2">
    <location>
        <begin position="65"/>
        <end position="171"/>
    </location>
</feature>
<feature type="glycosylation site" description="N-linked (GlcNAc...) asparagine" evidence="1">
    <location>
        <position position="68"/>
    </location>
</feature>
<feature type="glycosylation site" description="N-linked (GlcNAc...) asparagine" evidence="1">
    <location>
        <position position="410"/>
    </location>
</feature>
<feature type="glycosylation site" description="N-linked (GlcNAc...) asparagine" evidence="1">
    <location>
        <position position="539"/>
    </location>
</feature>
<name>GNT14_DICDI</name>
<dbReference type="EMBL" id="AAFI02000066">
    <property type="protein sequence ID" value="EAL65152.1"/>
    <property type="molecule type" value="Genomic_DNA"/>
</dbReference>
<dbReference type="RefSeq" id="XP_638506.1">
    <property type="nucleotide sequence ID" value="XM_633414.1"/>
</dbReference>
<dbReference type="SMR" id="Q54PG8"/>
<dbReference type="GlyCosmos" id="Q54PG8">
    <property type="glycosylation" value="3 sites, No reported glycans"/>
</dbReference>
<dbReference type="GlyGen" id="Q54PG8">
    <property type="glycosylation" value="3 sites"/>
</dbReference>
<dbReference type="PaxDb" id="44689-DDB0231852"/>
<dbReference type="EnsemblProtists" id="EAL65152">
    <property type="protein sequence ID" value="EAL65152"/>
    <property type="gene ID" value="DDB_G0284567"/>
</dbReference>
<dbReference type="GeneID" id="8624656"/>
<dbReference type="KEGG" id="ddi:DDB_G0284567"/>
<dbReference type="dictyBase" id="DDB_G0284567">
    <property type="gene designation" value="gnt14"/>
</dbReference>
<dbReference type="VEuPathDB" id="AmoebaDB:DDB_G0284567"/>
<dbReference type="eggNOG" id="KOG3765">
    <property type="taxonomic scope" value="Eukaryota"/>
</dbReference>
<dbReference type="HOGENOM" id="CLU_427915_0_0_1"/>
<dbReference type="InParanoid" id="Q54PG8"/>
<dbReference type="PRO" id="PR:Q54PG8"/>
<dbReference type="Proteomes" id="UP000002195">
    <property type="component" value="Chromosome 4"/>
</dbReference>
<dbReference type="GO" id="GO:0016020">
    <property type="term" value="C:membrane"/>
    <property type="evidence" value="ECO:0007669"/>
    <property type="project" value="UniProtKB-SubCell"/>
</dbReference>
<dbReference type="GO" id="GO:0015020">
    <property type="term" value="F:glucuronosyltransferase activity"/>
    <property type="evidence" value="ECO:0000318"/>
    <property type="project" value="GO_Central"/>
</dbReference>
<dbReference type="GO" id="GO:0042285">
    <property type="term" value="F:xylosyltransferase activity"/>
    <property type="evidence" value="ECO:0000318"/>
    <property type="project" value="GO_Central"/>
</dbReference>
<dbReference type="GO" id="GO:0035269">
    <property type="term" value="P:protein O-linked mannosylation"/>
    <property type="evidence" value="ECO:0000318"/>
    <property type="project" value="GO_Central"/>
</dbReference>
<dbReference type="FunFam" id="3.90.550.10:FF:000229">
    <property type="entry name" value="Glycosyltransferase-like protein LARGE"/>
    <property type="match status" value="1"/>
</dbReference>
<dbReference type="Gene3D" id="3.90.550.10">
    <property type="entry name" value="Spore Coat Polysaccharide Biosynthesis Protein SpsA, Chain A"/>
    <property type="match status" value="1"/>
</dbReference>
<dbReference type="InterPro" id="IPR029044">
    <property type="entry name" value="Nucleotide-diphossugar_trans"/>
</dbReference>
<dbReference type="InterPro" id="IPR051292">
    <property type="entry name" value="Xyl/GlcA_transferase"/>
</dbReference>
<dbReference type="PANTHER" id="PTHR12270:SF52">
    <property type="entry name" value="GLYCOSYLTRANSFERASE-LIKE PROTEIN GNT13-RELATED"/>
    <property type="match status" value="1"/>
</dbReference>
<dbReference type="PANTHER" id="PTHR12270">
    <property type="entry name" value="GLYCOSYLTRANSFERASE-RELATED"/>
    <property type="match status" value="1"/>
</dbReference>
<dbReference type="Pfam" id="PF13896">
    <property type="entry name" value="Glyco_transf_49"/>
    <property type="match status" value="1"/>
</dbReference>
<dbReference type="SUPFAM" id="SSF53448">
    <property type="entry name" value="Nucleotide-diphospho-sugar transferases"/>
    <property type="match status" value="1"/>
</dbReference>
<sequence length="640" mass="74409">MFGFKTTKNKKRVRLLVVAIGVMIFFMCLSNFSSIQSRQSSSTDTPLQQNGKHQVIRVLETQPSININNSENNINNENINNNQNNNPNNNMDNNNKNNNKNNNIDNNNNKNNNNNDNIDNNINNNNNNNNNNNNINNNNNINNNNNIDNTDNNINNNINNNNININNNNKPSYKKPEKKPPLSSSQIFFNSLPPHIQKQVVIREKSNYAQALQYDSYGIVPAKDFFDGLDAVFETKPNYKISTVRKLFNIENLNSNNNNNNNNNNNNNNNNNNNNNYDINNYNNINIKEDDKFENKNYQNGDKNIMYSDYKGIDYGNNNNIEEIERIKEELKIELEKENVNDIFKYRVTIVTQTTVDRLYKVAAMAERWRSPISVSLFIKSQGDIDKLEKAISANKILATFADFHLFYHNNTRYPVNNLRNLAIRNALTEHVLLLDVDFIPPSHLHDHIAHYINLNYLNQDDSLNAFVIPSFSSNLQPKDIPDSKFEFIEMLTKNKIEPSNLKVCPKCHSPTDYTRWMTSTEPYAIEYHWIYEPFLVYNRSQTLPFDERFKGYGFDKNSQIFGMAAQGFTFSVLPEAYIVHINHPTSRWDGPSLDDQQWDSLRVVCDLLPEIRKRYAKGYKVDRLFDEPTTENCYSNDHW</sequence>